<evidence type="ECO:0000250" key="1"/>
<evidence type="ECO:0000255" key="2">
    <source>
        <dbReference type="HAMAP-Rule" id="MF_01320"/>
    </source>
</evidence>
<evidence type="ECO:0000256" key="3">
    <source>
        <dbReference type="SAM" id="MobiDB-lite"/>
    </source>
</evidence>
<evidence type="ECO:0000305" key="4"/>
<organism>
    <name type="scientific">Glycine max</name>
    <name type="common">Soybean</name>
    <name type="synonym">Glycine hispida</name>
    <dbReference type="NCBI Taxonomy" id="3847"/>
    <lineage>
        <taxon>Eukaryota</taxon>
        <taxon>Viridiplantae</taxon>
        <taxon>Streptophyta</taxon>
        <taxon>Embryophyta</taxon>
        <taxon>Tracheophyta</taxon>
        <taxon>Spermatophyta</taxon>
        <taxon>Magnoliopsida</taxon>
        <taxon>eudicotyledons</taxon>
        <taxon>Gunneridae</taxon>
        <taxon>Pentapetalae</taxon>
        <taxon>rosids</taxon>
        <taxon>fabids</taxon>
        <taxon>Fabales</taxon>
        <taxon>Fabaceae</taxon>
        <taxon>Papilionoideae</taxon>
        <taxon>50 kb inversion clade</taxon>
        <taxon>NPAAA clade</taxon>
        <taxon>indigoferoid/millettioid clade</taxon>
        <taxon>Phaseoleae</taxon>
        <taxon>Glycine</taxon>
        <taxon>Glycine subgen. Soja</taxon>
    </lineage>
</organism>
<geneLocation type="chloroplast"/>
<gene>
    <name type="primary">rpl2-B</name>
</gene>
<feature type="chain" id="PRO_0000223671" description="Large ribosomal subunit protein uL2cy">
    <location>
        <begin position="1"/>
        <end position="274"/>
    </location>
</feature>
<feature type="region of interest" description="Disordered" evidence="3">
    <location>
        <begin position="1"/>
        <end position="22"/>
    </location>
</feature>
<feature type="region of interest" description="Disordered" evidence="3">
    <location>
        <begin position="224"/>
        <end position="274"/>
    </location>
</feature>
<name>RK2B_SOYBN</name>
<protein>
    <recommendedName>
        <fullName evidence="2">Large ribosomal subunit protein uL2cy</fullName>
    </recommendedName>
    <alternativeName>
        <fullName evidence="4">50S ribosomal protein L2-B, chloroplastic</fullName>
    </alternativeName>
</protein>
<proteinExistence type="inferred from homology"/>
<accession>Q2PMM3</accession>
<dbReference type="EMBL" id="DQ317523">
    <property type="protein sequence ID" value="ABC25187.1"/>
    <property type="molecule type" value="Genomic_DNA"/>
</dbReference>
<dbReference type="SMR" id="Q2PMM3"/>
<dbReference type="FunCoup" id="Q2PMM3">
    <property type="interactions" value="1420"/>
</dbReference>
<dbReference type="STRING" id="3847.Q2PMM3"/>
<dbReference type="KEGG" id="gmx:3989255"/>
<dbReference type="InParanoid" id="Q2PMM3"/>
<dbReference type="Proteomes" id="UP000008827">
    <property type="component" value="Chloroplast"/>
</dbReference>
<dbReference type="GO" id="GO:0009507">
    <property type="term" value="C:chloroplast"/>
    <property type="evidence" value="ECO:0007669"/>
    <property type="project" value="UniProtKB-SubCell"/>
</dbReference>
<dbReference type="GO" id="GO:0005762">
    <property type="term" value="C:mitochondrial large ribosomal subunit"/>
    <property type="evidence" value="ECO:0000318"/>
    <property type="project" value="GO_Central"/>
</dbReference>
<dbReference type="GO" id="GO:0003723">
    <property type="term" value="F:RNA binding"/>
    <property type="evidence" value="ECO:0000318"/>
    <property type="project" value="GO_Central"/>
</dbReference>
<dbReference type="GO" id="GO:0019843">
    <property type="term" value="F:rRNA binding"/>
    <property type="evidence" value="ECO:0007669"/>
    <property type="project" value="UniProtKB-UniRule"/>
</dbReference>
<dbReference type="GO" id="GO:0003735">
    <property type="term" value="F:structural constituent of ribosome"/>
    <property type="evidence" value="ECO:0000318"/>
    <property type="project" value="GO_Central"/>
</dbReference>
<dbReference type="GO" id="GO:0016740">
    <property type="term" value="F:transferase activity"/>
    <property type="evidence" value="ECO:0007669"/>
    <property type="project" value="InterPro"/>
</dbReference>
<dbReference type="GO" id="GO:0032543">
    <property type="term" value="P:mitochondrial translation"/>
    <property type="evidence" value="ECO:0000318"/>
    <property type="project" value="GO_Central"/>
</dbReference>
<dbReference type="FunFam" id="4.10.950.10:FF:000001">
    <property type="entry name" value="50S ribosomal protein L2"/>
    <property type="match status" value="1"/>
</dbReference>
<dbReference type="FunFam" id="2.30.30.30:FF:000008">
    <property type="entry name" value="50S ribosomal protein L2, chloroplastic"/>
    <property type="match status" value="1"/>
</dbReference>
<dbReference type="FunFam" id="2.40.50.140:FF:000029">
    <property type="entry name" value="50S ribosomal protein L2, chloroplastic"/>
    <property type="match status" value="1"/>
</dbReference>
<dbReference type="Gene3D" id="2.30.30.30">
    <property type="match status" value="1"/>
</dbReference>
<dbReference type="Gene3D" id="2.40.50.140">
    <property type="entry name" value="Nucleic acid-binding proteins"/>
    <property type="match status" value="1"/>
</dbReference>
<dbReference type="Gene3D" id="4.10.950.10">
    <property type="entry name" value="Ribosomal protein L2, domain 3"/>
    <property type="match status" value="1"/>
</dbReference>
<dbReference type="HAMAP" id="MF_01320_B">
    <property type="entry name" value="Ribosomal_uL2_B"/>
    <property type="match status" value="1"/>
</dbReference>
<dbReference type="InterPro" id="IPR012340">
    <property type="entry name" value="NA-bd_OB-fold"/>
</dbReference>
<dbReference type="InterPro" id="IPR014722">
    <property type="entry name" value="Rib_uL2_dom2"/>
</dbReference>
<dbReference type="InterPro" id="IPR002171">
    <property type="entry name" value="Ribosomal_uL2"/>
</dbReference>
<dbReference type="InterPro" id="IPR005880">
    <property type="entry name" value="Ribosomal_uL2_bac/org-type"/>
</dbReference>
<dbReference type="InterPro" id="IPR022669">
    <property type="entry name" value="Ribosomal_uL2_C"/>
</dbReference>
<dbReference type="InterPro" id="IPR022671">
    <property type="entry name" value="Ribosomal_uL2_CS"/>
</dbReference>
<dbReference type="InterPro" id="IPR014726">
    <property type="entry name" value="Ribosomal_uL2_dom3"/>
</dbReference>
<dbReference type="InterPro" id="IPR022666">
    <property type="entry name" value="Ribosomal_uL2_RNA-bd_dom"/>
</dbReference>
<dbReference type="InterPro" id="IPR008991">
    <property type="entry name" value="Translation_prot_SH3-like_sf"/>
</dbReference>
<dbReference type="NCBIfam" id="TIGR01171">
    <property type="entry name" value="rplB_bact"/>
    <property type="match status" value="1"/>
</dbReference>
<dbReference type="PANTHER" id="PTHR13691:SF5">
    <property type="entry name" value="LARGE RIBOSOMAL SUBUNIT PROTEIN UL2M"/>
    <property type="match status" value="1"/>
</dbReference>
<dbReference type="PANTHER" id="PTHR13691">
    <property type="entry name" value="RIBOSOMAL PROTEIN L2"/>
    <property type="match status" value="1"/>
</dbReference>
<dbReference type="Pfam" id="PF00181">
    <property type="entry name" value="Ribosomal_L2"/>
    <property type="match status" value="1"/>
</dbReference>
<dbReference type="Pfam" id="PF03947">
    <property type="entry name" value="Ribosomal_L2_C"/>
    <property type="match status" value="1"/>
</dbReference>
<dbReference type="PIRSF" id="PIRSF002158">
    <property type="entry name" value="Ribosomal_L2"/>
    <property type="match status" value="1"/>
</dbReference>
<dbReference type="SMART" id="SM01383">
    <property type="entry name" value="Ribosomal_L2"/>
    <property type="match status" value="1"/>
</dbReference>
<dbReference type="SMART" id="SM01382">
    <property type="entry name" value="Ribosomal_L2_C"/>
    <property type="match status" value="1"/>
</dbReference>
<dbReference type="SUPFAM" id="SSF50249">
    <property type="entry name" value="Nucleic acid-binding proteins"/>
    <property type="match status" value="1"/>
</dbReference>
<dbReference type="SUPFAM" id="SSF50104">
    <property type="entry name" value="Translation proteins SH3-like domain"/>
    <property type="match status" value="1"/>
</dbReference>
<dbReference type="PROSITE" id="PS00467">
    <property type="entry name" value="RIBOSOMAL_L2"/>
    <property type="match status" value="1"/>
</dbReference>
<comment type="subunit">
    <text evidence="1">Part of the 50S ribosomal subunit.</text>
</comment>
<comment type="subcellular location">
    <subcellularLocation>
        <location>Plastid</location>
        <location>Chloroplast</location>
    </subcellularLocation>
</comment>
<comment type="similarity">
    <text evidence="4">Belongs to the universal ribosomal protein uL2 family.</text>
</comment>
<comment type="caution">
    <text evidence="4">There is 1 gene for this protein in each of the chloroplast inverted repeats; while they are usually identical, in this organism they are not. The other copy is AC P18663.</text>
</comment>
<sequence length="274" mass="29837">MAIHLYKTSTPSTRNGAVDSQVKSNPRNHLIYGQHRCGKGRNARGIITAGHRGGGHKRLYRKIDFRRNEKNIYGRIVTIEYDPNRNAYICLIHYGDGEKKYILHPRGAIIGDTIVSGTEVPIKMGNALPLSDMPLGTAIHNIEITLGKGGQLARAAGAVAKLIAKEGKSATLKLPSGEVRLISKNCSATVGQVGNVGVNQKNLGRAGSKCWLGKRPVVRGVVMNPVDHPHGGGEGRAPIGRKKPATPWGFPALGRRSRKRKKYSDNLILRRRTK</sequence>
<keyword id="KW-0150">Chloroplast</keyword>
<keyword id="KW-0934">Plastid</keyword>
<keyword id="KW-1185">Reference proteome</keyword>
<keyword id="KW-0687">Ribonucleoprotein</keyword>
<keyword id="KW-0689">Ribosomal protein</keyword>
<reference key="1">
    <citation type="journal article" date="2005" name="Plant Mol. Biol.">
        <title>Complete chloroplast genome sequence of Glycine max and comparative analyses with other legume genomes.</title>
        <authorList>
            <person name="Saski C."/>
            <person name="Lee S.-B."/>
            <person name="Daniell H."/>
            <person name="Wood T.C."/>
            <person name="Tomkins J."/>
            <person name="Kim H.-G."/>
            <person name="Jansen R.K."/>
        </authorList>
    </citation>
    <scope>NUCLEOTIDE SEQUENCE [LARGE SCALE GENOMIC DNA]</scope>
    <source>
        <strain>cv. PI 437654</strain>
    </source>
</reference>